<comment type="function">
    <text evidence="1">This is one of the proteins that bind and probably mediate the attachment of the 5S RNA into the large ribosomal subunit, where it forms part of the central protuberance.</text>
</comment>
<comment type="subunit">
    <text evidence="1">Part of the 50S ribosomal subunit; part of the 5S rRNA/L5/L18/L25 subcomplex. Contacts the 5S and 23S rRNAs.</text>
</comment>
<comment type="similarity">
    <text evidence="1">Belongs to the universal ribosomal protein uL18 family.</text>
</comment>
<reference key="1">
    <citation type="journal article" date="2009" name="BMC Genomics">
        <title>Metabolic analysis of the soil microbe Dechloromonas aromatica str. RCB: indications of a surprisingly complex life-style and cryptic anaerobic pathways for aromatic degradation.</title>
        <authorList>
            <person name="Salinero K.K."/>
            <person name="Keller K."/>
            <person name="Feil W.S."/>
            <person name="Feil H."/>
            <person name="Trong S."/>
            <person name="Di Bartolo G."/>
            <person name="Lapidus A."/>
        </authorList>
    </citation>
    <scope>NUCLEOTIDE SEQUENCE [LARGE SCALE GENOMIC DNA]</scope>
    <source>
        <strain>RCB</strain>
    </source>
</reference>
<feature type="chain" id="PRO_0000251304" description="Large ribosomal subunit protein uL18">
    <location>
        <begin position="1"/>
        <end position="118"/>
    </location>
</feature>
<dbReference type="EMBL" id="CP000089">
    <property type="protein sequence ID" value="AAZ45094.1"/>
    <property type="molecule type" value="Genomic_DNA"/>
</dbReference>
<dbReference type="SMR" id="Q47J87"/>
<dbReference type="STRING" id="159087.Daro_0335"/>
<dbReference type="KEGG" id="dar:Daro_0335"/>
<dbReference type="eggNOG" id="COG0256">
    <property type="taxonomic scope" value="Bacteria"/>
</dbReference>
<dbReference type="HOGENOM" id="CLU_098841_0_1_4"/>
<dbReference type="OrthoDB" id="9810939at2"/>
<dbReference type="GO" id="GO:0022625">
    <property type="term" value="C:cytosolic large ribosomal subunit"/>
    <property type="evidence" value="ECO:0007669"/>
    <property type="project" value="TreeGrafter"/>
</dbReference>
<dbReference type="GO" id="GO:0008097">
    <property type="term" value="F:5S rRNA binding"/>
    <property type="evidence" value="ECO:0007669"/>
    <property type="project" value="TreeGrafter"/>
</dbReference>
<dbReference type="GO" id="GO:0003735">
    <property type="term" value="F:structural constituent of ribosome"/>
    <property type="evidence" value="ECO:0007669"/>
    <property type="project" value="InterPro"/>
</dbReference>
<dbReference type="GO" id="GO:0006412">
    <property type="term" value="P:translation"/>
    <property type="evidence" value="ECO:0007669"/>
    <property type="project" value="UniProtKB-UniRule"/>
</dbReference>
<dbReference type="CDD" id="cd00432">
    <property type="entry name" value="Ribosomal_L18_L5e"/>
    <property type="match status" value="1"/>
</dbReference>
<dbReference type="FunFam" id="3.30.420.100:FF:000001">
    <property type="entry name" value="50S ribosomal protein L18"/>
    <property type="match status" value="1"/>
</dbReference>
<dbReference type="Gene3D" id="3.30.420.100">
    <property type="match status" value="1"/>
</dbReference>
<dbReference type="HAMAP" id="MF_01337_B">
    <property type="entry name" value="Ribosomal_uL18_B"/>
    <property type="match status" value="1"/>
</dbReference>
<dbReference type="InterPro" id="IPR004389">
    <property type="entry name" value="Ribosomal_uL18_bac-type"/>
</dbReference>
<dbReference type="InterPro" id="IPR005484">
    <property type="entry name" value="Ribosomal_uL18_bac/euk"/>
</dbReference>
<dbReference type="NCBIfam" id="TIGR00060">
    <property type="entry name" value="L18_bact"/>
    <property type="match status" value="1"/>
</dbReference>
<dbReference type="PANTHER" id="PTHR12899">
    <property type="entry name" value="39S RIBOSOMAL PROTEIN L18, MITOCHONDRIAL"/>
    <property type="match status" value="1"/>
</dbReference>
<dbReference type="PANTHER" id="PTHR12899:SF3">
    <property type="entry name" value="LARGE RIBOSOMAL SUBUNIT PROTEIN UL18M"/>
    <property type="match status" value="1"/>
</dbReference>
<dbReference type="Pfam" id="PF00861">
    <property type="entry name" value="Ribosomal_L18p"/>
    <property type="match status" value="1"/>
</dbReference>
<dbReference type="SUPFAM" id="SSF53137">
    <property type="entry name" value="Translational machinery components"/>
    <property type="match status" value="1"/>
</dbReference>
<name>RL18_DECAR</name>
<keyword id="KW-0687">Ribonucleoprotein</keyword>
<keyword id="KW-0689">Ribosomal protein</keyword>
<keyword id="KW-0694">RNA-binding</keyword>
<keyword id="KW-0699">rRNA-binding</keyword>
<organism>
    <name type="scientific">Dechloromonas aromatica (strain RCB)</name>
    <dbReference type="NCBI Taxonomy" id="159087"/>
    <lineage>
        <taxon>Bacteria</taxon>
        <taxon>Pseudomonadati</taxon>
        <taxon>Pseudomonadota</taxon>
        <taxon>Betaproteobacteria</taxon>
        <taxon>Rhodocyclales</taxon>
        <taxon>Azonexaceae</taxon>
        <taxon>Dechloromonas</taxon>
    </lineage>
</organism>
<proteinExistence type="inferred from homology"/>
<sequence length="118" mass="12750">MFNKKQARLRRARKTRAKIAELKAVRLCVNRTNCHIYAQIISPCGGKVLASASTLDTDVRKDLANGGNKAAATTIGKLIAERAKAAGIEQVAFDRSGLQYHGRIQALAEAAREGGLKF</sequence>
<accession>Q47J87</accession>
<protein>
    <recommendedName>
        <fullName evidence="1">Large ribosomal subunit protein uL18</fullName>
    </recommendedName>
    <alternativeName>
        <fullName evidence="2">50S ribosomal protein L18</fullName>
    </alternativeName>
</protein>
<evidence type="ECO:0000255" key="1">
    <source>
        <dbReference type="HAMAP-Rule" id="MF_01337"/>
    </source>
</evidence>
<evidence type="ECO:0000305" key="2"/>
<gene>
    <name evidence="1" type="primary">rplR</name>
    <name type="ordered locus">Daro_0335</name>
</gene>